<accession>B0FRF9</accession>
<comment type="function">
    <text evidence="5">Catalyzes the reversible transfer of high energy ATP gamma-phosphate group to L-arginine.</text>
</comment>
<comment type="catalytic activity">
    <reaction evidence="5">
        <text>L-arginine + ATP = N(omega)-phospho-L-arginine + ADP + H(+)</text>
        <dbReference type="Rhea" id="RHEA:22940"/>
        <dbReference type="ChEBI" id="CHEBI:15378"/>
        <dbReference type="ChEBI" id="CHEBI:30616"/>
        <dbReference type="ChEBI" id="CHEBI:32682"/>
        <dbReference type="ChEBI" id="CHEBI:58477"/>
        <dbReference type="ChEBI" id="CHEBI:456216"/>
        <dbReference type="EC" id="2.7.3.3"/>
    </reaction>
    <physiologicalReaction direction="left-to-right" evidence="8">
        <dbReference type="Rhea" id="RHEA:22941"/>
    </physiologicalReaction>
    <physiologicalReaction direction="right-to-left" evidence="8">
        <dbReference type="Rhea" id="RHEA:22942"/>
    </physiologicalReaction>
</comment>
<comment type="activity regulation">
    <text evidence="5">No change in activity after supplementation with 10 mM glucose. However, activity decreases significantly when glucose concentration is higher than 50 mM and almost all activity is lost with 200 mM glucose. Activity is significantly increased after treatment with 10 mM and 50 mM ATP. However, activity drops significantly with 200 mM ATP. Inhibited by 10-200 mM alpha-ketoglutarate. No change in activity after incubation with 10-200 mM L-citrulline, L-ornaline or glycerol.</text>
</comment>
<comment type="tissue specificity">
    <text evidence="5">Expressed in muscle (at protein level). Expressed in muscle, heart, nerve, stomach and hemocytes, with the highest expression in muscle. Very low expression in eyestalk and intestine. Not expressed in hepatopancreas, gill and skin.</text>
</comment>
<comment type="induction">
    <text evidence="5">By LPS immunostimulation. In hemocytes, expression increases sharply at 3 hours, decreases slightly at 6 hours, increases significantly again at 24 hours and decreases at 48 hours after LPS injection. In muscle, expressed less than the control in the first 6 hours, then the expression increases strikingly from 6 to 24 hours and decreases at 48 hours after LPS injection.</text>
</comment>
<comment type="allergen">
    <text evidence="7">Causes an allergic reaction in human. Binds to IgE (Probable).</text>
</comment>
<comment type="similarity">
    <text evidence="3 4 7">Belongs to the ATP:guanido phosphotransferase family.</text>
</comment>
<feature type="initiator methionine" description="Removed" evidence="1">
    <location>
        <position position="1"/>
    </location>
</feature>
<feature type="chain" id="PRO_0000447431" description="Arginine kinase Lit v 2" evidence="1">
    <location>
        <begin position="2"/>
        <end position="356"/>
    </location>
</feature>
<feature type="domain" description="Phosphagen kinase N-terminal" evidence="2">
    <location>
        <begin position="9"/>
        <end position="91"/>
    </location>
</feature>
<feature type="domain" description="Phosphagen kinase C-terminal" evidence="3">
    <location>
        <begin position="119"/>
        <end position="356"/>
    </location>
</feature>
<feature type="binding site" evidence="1">
    <location>
        <begin position="64"/>
        <end position="68"/>
    </location>
    <ligand>
        <name>L-arginine</name>
        <dbReference type="ChEBI" id="CHEBI:32682"/>
    </ligand>
</feature>
<feature type="binding site" evidence="3">
    <location>
        <begin position="122"/>
        <end position="126"/>
    </location>
    <ligand>
        <name>ATP</name>
        <dbReference type="ChEBI" id="CHEBI:30616"/>
    </ligand>
</feature>
<feature type="binding site" evidence="3">
    <location>
        <position position="185"/>
    </location>
    <ligand>
        <name>ATP</name>
        <dbReference type="ChEBI" id="CHEBI:30616"/>
    </ligand>
</feature>
<feature type="binding site" evidence="1">
    <location>
        <position position="225"/>
    </location>
    <ligand>
        <name>L-arginine</name>
        <dbReference type="ChEBI" id="CHEBI:32682"/>
    </ligand>
</feature>
<feature type="binding site" evidence="3">
    <location>
        <position position="229"/>
    </location>
    <ligand>
        <name>ATP</name>
        <dbReference type="ChEBI" id="CHEBI:30616"/>
    </ligand>
</feature>
<feature type="binding site" evidence="1">
    <location>
        <position position="271"/>
    </location>
    <ligand>
        <name>L-arginine</name>
        <dbReference type="ChEBI" id="CHEBI:32682"/>
    </ligand>
</feature>
<feature type="binding site" evidence="3">
    <location>
        <begin position="280"/>
        <end position="284"/>
    </location>
    <ligand>
        <name>ATP</name>
        <dbReference type="ChEBI" id="CHEBI:30616"/>
    </ligand>
</feature>
<feature type="binding site" evidence="3">
    <location>
        <begin position="309"/>
        <end position="314"/>
    </location>
    <ligand>
        <name>ATP</name>
        <dbReference type="ChEBI" id="CHEBI:30616"/>
    </ligand>
</feature>
<feature type="binding site" evidence="1">
    <location>
        <position position="314"/>
    </location>
    <ligand>
        <name>L-arginine</name>
        <dbReference type="ChEBI" id="CHEBI:32682"/>
    </ligand>
</feature>
<dbReference type="EC" id="2.7.3.3" evidence="5"/>
<dbReference type="EMBL" id="EU346737">
    <property type="protein sequence ID" value="ABY57915.1"/>
    <property type="molecule type" value="mRNA"/>
</dbReference>
<dbReference type="SMR" id="B0FRF9"/>
<dbReference type="Allergome" id="3544">
    <property type="allergen name" value="Lit v 2"/>
</dbReference>
<dbReference type="OrthoDB" id="430219at2759"/>
<dbReference type="BioCyc" id="MetaCyc:MONOMER-18221"/>
<dbReference type="BRENDA" id="2.7.3.3">
    <property type="organism ID" value="4594"/>
</dbReference>
<dbReference type="GO" id="GO:0005615">
    <property type="term" value="C:extracellular space"/>
    <property type="evidence" value="ECO:0007669"/>
    <property type="project" value="TreeGrafter"/>
</dbReference>
<dbReference type="GO" id="GO:0004054">
    <property type="term" value="F:arginine kinase activity"/>
    <property type="evidence" value="ECO:0000314"/>
    <property type="project" value="UniProtKB"/>
</dbReference>
<dbReference type="GO" id="GO:0005524">
    <property type="term" value="F:ATP binding"/>
    <property type="evidence" value="ECO:0000250"/>
    <property type="project" value="UniProtKB"/>
</dbReference>
<dbReference type="GO" id="GO:0004111">
    <property type="term" value="F:creatine kinase activity"/>
    <property type="evidence" value="ECO:0007669"/>
    <property type="project" value="InterPro"/>
</dbReference>
<dbReference type="GO" id="GO:0046314">
    <property type="term" value="P:phosphocreatine biosynthetic process"/>
    <property type="evidence" value="ECO:0007669"/>
    <property type="project" value="InterPro"/>
</dbReference>
<dbReference type="CDD" id="cd07932">
    <property type="entry name" value="arginine_kinase_like"/>
    <property type="match status" value="1"/>
</dbReference>
<dbReference type="FunFam" id="3.30.590.10:FF:000006">
    <property type="entry name" value="Arginine kinase 1"/>
    <property type="match status" value="1"/>
</dbReference>
<dbReference type="FunFam" id="1.10.135.10:FF:000003">
    <property type="entry name" value="Three-domain arginine kinase"/>
    <property type="match status" value="1"/>
</dbReference>
<dbReference type="Gene3D" id="1.10.135.10">
    <property type="entry name" value="ATP:guanido phosphotransferase, N-terminal domain"/>
    <property type="match status" value="1"/>
</dbReference>
<dbReference type="Gene3D" id="3.30.590.10">
    <property type="entry name" value="Glutamine synthetase/guanido kinase, catalytic domain"/>
    <property type="match status" value="1"/>
</dbReference>
<dbReference type="InterPro" id="IPR000749">
    <property type="entry name" value="ATP-guanido_PTrfase"/>
</dbReference>
<dbReference type="InterPro" id="IPR022415">
    <property type="entry name" value="ATP-guanido_PTrfase_AS"/>
</dbReference>
<dbReference type="InterPro" id="IPR022414">
    <property type="entry name" value="ATP-guanido_PTrfase_cat"/>
</dbReference>
<dbReference type="InterPro" id="IPR022413">
    <property type="entry name" value="ATP-guanido_PTrfase_N"/>
</dbReference>
<dbReference type="InterPro" id="IPR036802">
    <property type="entry name" value="ATP-guanido_PTrfase_N_sf"/>
</dbReference>
<dbReference type="InterPro" id="IPR014746">
    <property type="entry name" value="Gln_synth/guanido_kin_cat_dom"/>
</dbReference>
<dbReference type="PANTHER" id="PTHR11547:SF38">
    <property type="entry name" value="ARGININE KINASE 1-RELATED"/>
    <property type="match status" value="1"/>
</dbReference>
<dbReference type="PANTHER" id="PTHR11547">
    <property type="entry name" value="ARGININE OR CREATINE KINASE"/>
    <property type="match status" value="1"/>
</dbReference>
<dbReference type="Pfam" id="PF00217">
    <property type="entry name" value="ATP-gua_Ptrans"/>
    <property type="match status" value="1"/>
</dbReference>
<dbReference type="Pfam" id="PF02807">
    <property type="entry name" value="ATP-gua_PtransN"/>
    <property type="match status" value="1"/>
</dbReference>
<dbReference type="SUPFAM" id="SSF55931">
    <property type="entry name" value="Glutamine synthetase/guanido kinase"/>
    <property type="match status" value="1"/>
</dbReference>
<dbReference type="SUPFAM" id="SSF48034">
    <property type="entry name" value="Guanido kinase N-terminal domain"/>
    <property type="match status" value="1"/>
</dbReference>
<dbReference type="PROSITE" id="PS00112">
    <property type="entry name" value="PHOSPHAGEN_KINASE"/>
    <property type="match status" value="1"/>
</dbReference>
<dbReference type="PROSITE" id="PS51510">
    <property type="entry name" value="PHOSPHAGEN_KINASE_C"/>
    <property type="match status" value="1"/>
</dbReference>
<dbReference type="PROSITE" id="PS51509">
    <property type="entry name" value="PHOSPHAGEN_KINASE_N"/>
    <property type="match status" value="1"/>
</dbReference>
<organism>
    <name type="scientific">Penaeus vannamei</name>
    <name type="common">Whiteleg shrimp</name>
    <name type="synonym">Litopenaeus vannamei</name>
    <dbReference type="NCBI Taxonomy" id="6689"/>
    <lineage>
        <taxon>Eukaryota</taxon>
        <taxon>Metazoa</taxon>
        <taxon>Ecdysozoa</taxon>
        <taxon>Arthropoda</taxon>
        <taxon>Crustacea</taxon>
        <taxon>Multicrustacea</taxon>
        <taxon>Malacostraca</taxon>
        <taxon>Eumalacostraca</taxon>
        <taxon>Eucarida</taxon>
        <taxon>Decapoda</taxon>
        <taxon>Dendrobranchiata</taxon>
        <taxon>Penaeoidea</taxon>
        <taxon>Penaeidae</taxon>
        <taxon>Penaeus</taxon>
    </lineage>
</organism>
<name>KARG_PENVA</name>
<evidence type="ECO:0000250" key="1">
    <source>
        <dbReference type="UniProtKB" id="Q004B5"/>
    </source>
</evidence>
<evidence type="ECO:0000255" key="2">
    <source>
        <dbReference type="PROSITE-ProRule" id="PRU00842"/>
    </source>
</evidence>
<evidence type="ECO:0000255" key="3">
    <source>
        <dbReference type="PROSITE-ProRule" id="PRU00843"/>
    </source>
</evidence>
<evidence type="ECO:0000255" key="4">
    <source>
        <dbReference type="RuleBase" id="RU000505"/>
    </source>
</evidence>
<evidence type="ECO:0000269" key="5">
    <source>
    </source>
</evidence>
<evidence type="ECO:0000303" key="6">
    <source>
    </source>
</evidence>
<evidence type="ECO:0000305" key="7"/>
<evidence type="ECO:0000305" key="8">
    <source>
    </source>
</evidence>
<evidence type="ECO:0000312" key="9">
    <source>
        <dbReference type="EMBL" id="ABY57915.1"/>
    </source>
</evidence>
<sequence length="356" mass="40168">MADAAVIEKLEAGFKKLEAATDCKSLLKKYLTKEVFDKLKDKKTSLGATLLDVIQSGVENLDSGVGIYAPDAEAYTLFAPLFDPIIEDYHVGFKQTDKHPNKDFGDVNSFVNVDPEGKFVISTRVRCGRSMQGYPFNPCLTESQYKEMEAKVSSTLSSLEGELKGTYYPLTGMSKEVQQKLIDDHFLFKEGDRFLQAANACRYWPAGRGIYHNDNKTFLVWVNEEDHLRIISMQMGGDLGQVFRRLTSAVNEIEKRIPFSHHDRLGFLTFCPTNLGTTVRASVHIKLPKLAANREKLEEVAGKYNLQVRGTRGEHTEAEGGIYDISNKRRMGLTEFQAVKEMQDGILELIKMEKEM</sequence>
<protein>
    <recommendedName>
        <fullName evidence="7">Arginine kinase Lit v 2</fullName>
        <ecNumber evidence="5">2.7.3.3</ecNumber>
    </recommendedName>
    <alternativeName>
        <fullName evidence="6 9">Arginine kinase</fullName>
        <shortName evidence="6">AK</shortName>
    </alternativeName>
    <allergenName evidence="7">Lit v 2</allergenName>
</protein>
<reference evidence="9" key="1">
    <citation type="journal article" date="2009" name="Fish Shellfish Immunol.">
        <title>Arginine kinase from Litopenaeus vannamei: cloning, expression and catalytic properties.</title>
        <authorList>
            <person name="Yao C.L."/>
            <person name="Ji P.F."/>
            <person name="Kong P."/>
            <person name="Wang Z.Y."/>
            <person name="Xiang J.H."/>
        </authorList>
    </citation>
    <scope>NUCLEOTIDE SEQUENCE [MRNA]</scope>
    <scope>FUNCTION</scope>
    <scope>CATALYTIC ACTIVITY</scope>
    <scope>ACTIVITY REGULATION</scope>
    <scope>TISSUE SPECIFICITY</scope>
    <scope>INDUCTION</scope>
    <source>
        <tissue evidence="6">Muscle</tissue>
    </source>
</reference>
<proteinExistence type="evidence at protein level"/>
<keyword id="KW-0020">Allergen</keyword>
<keyword id="KW-0067">ATP-binding</keyword>
<keyword id="KW-0418">Kinase</keyword>
<keyword id="KW-0547">Nucleotide-binding</keyword>
<keyword id="KW-0808">Transferase</keyword>